<comment type="function">
    <text evidence="1 2">GTP-specific succinyl-CoA synthetase functions in the citric acid cycle (TCA), coupling the hydrolysis of succinyl-CoA to the synthesis of GTP and thus represents the only step of substrate-level phosphorylation in the TCA. The beta subunit provides nucleotide specificity of the enzyme and binds the substrate succinate, while the binding sites for coenzyme A and phosphate are found in the alpha subunit.</text>
</comment>
<comment type="catalytic activity">
    <reaction evidence="1 2">
        <text>GTP + succinate + CoA = succinyl-CoA + GDP + phosphate</text>
        <dbReference type="Rhea" id="RHEA:22120"/>
        <dbReference type="ChEBI" id="CHEBI:30031"/>
        <dbReference type="ChEBI" id="CHEBI:37565"/>
        <dbReference type="ChEBI" id="CHEBI:43474"/>
        <dbReference type="ChEBI" id="CHEBI:57287"/>
        <dbReference type="ChEBI" id="CHEBI:57292"/>
        <dbReference type="ChEBI" id="CHEBI:58189"/>
        <dbReference type="EC" id="6.2.1.4"/>
    </reaction>
</comment>
<comment type="cofactor">
    <cofactor evidence="1">
        <name>Mg(2+)</name>
        <dbReference type="ChEBI" id="CHEBI:18420"/>
    </cofactor>
    <text evidence="1">Binds 1 Mg(2+) ion per subunit.</text>
</comment>
<comment type="biophysicochemical properties">
    <kinetics>
        <KM evidence="2">0.036 mM for GTP</KM>
        <KM evidence="2">0.007 mM for GDP</KM>
    </kinetics>
</comment>
<comment type="pathway">
    <text evidence="1 4">Carbohydrate metabolism; tricarboxylic acid cycle; succinate from succinyl-CoA (ligase route): step 1/1.</text>
</comment>
<comment type="subunit">
    <text evidence="1 2">Heterodimer of an alpha and a beta subunit. The beta subunit determines specificity for GTP.</text>
</comment>
<comment type="subcellular location">
    <subcellularLocation>
        <location evidence="1 2">Mitochondrion</location>
    </subcellularLocation>
</comment>
<comment type="tissue specificity">
    <text evidence="3">Widely expressed. Not present in breast muscle.</text>
</comment>
<comment type="similarity">
    <text evidence="1">Belongs to the succinate/malate CoA ligase beta subunit family. GTP-specific subunit beta subfamily.</text>
</comment>
<proteinExistence type="evidence at protein level"/>
<accession>Q9YI36</accession>
<protein>
    <recommendedName>
        <fullName evidence="1">Succinate--CoA ligase [GDP-forming] subunit beta, mitochondrial</fullName>
        <ecNumber evidence="1 2">6.2.1.4</ecNumber>
    </recommendedName>
    <alternativeName>
        <fullName evidence="1">GTP-specific succinyl-CoA synthetase subunit beta</fullName>
        <shortName evidence="1">G-SCS</shortName>
        <shortName evidence="1">GTPSCS</shortName>
    </alternativeName>
    <alternativeName>
        <fullName evidence="1">Succinyl-CoA synthetase beta-G chain</fullName>
        <shortName evidence="1">SCS-betaG</shortName>
    </alternativeName>
</protein>
<dbReference type="EC" id="6.2.1.4" evidence="1 2"/>
<dbReference type="EMBL" id="AF043541">
    <property type="protein sequence ID" value="AAC69706.1"/>
    <property type="molecule type" value="mRNA"/>
</dbReference>
<dbReference type="SMR" id="Q9YI36"/>
<dbReference type="eggNOG" id="KOG1447">
    <property type="taxonomic scope" value="Eukaryota"/>
</dbReference>
<dbReference type="SABIO-RK" id="Q9YI36"/>
<dbReference type="UniPathway" id="UPA00223">
    <property type="reaction ID" value="UER00999"/>
</dbReference>
<dbReference type="GO" id="GO:0005739">
    <property type="term" value="C:mitochondrion"/>
    <property type="evidence" value="ECO:0007669"/>
    <property type="project" value="UniProtKB-SubCell"/>
</dbReference>
<dbReference type="GO" id="GO:0042709">
    <property type="term" value="C:succinate-CoA ligase complex"/>
    <property type="evidence" value="ECO:0007669"/>
    <property type="project" value="TreeGrafter"/>
</dbReference>
<dbReference type="GO" id="GO:0005524">
    <property type="term" value="F:ATP binding"/>
    <property type="evidence" value="ECO:0007669"/>
    <property type="project" value="InterPro"/>
</dbReference>
<dbReference type="GO" id="GO:0005525">
    <property type="term" value="F:GTP binding"/>
    <property type="evidence" value="ECO:0007669"/>
    <property type="project" value="UniProtKB-KW"/>
</dbReference>
<dbReference type="GO" id="GO:0046872">
    <property type="term" value="F:metal ion binding"/>
    <property type="evidence" value="ECO:0007669"/>
    <property type="project" value="UniProtKB-KW"/>
</dbReference>
<dbReference type="GO" id="GO:0004776">
    <property type="term" value="F:succinate-CoA ligase (GDP-forming) activity"/>
    <property type="evidence" value="ECO:0007669"/>
    <property type="project" value="UniProtKB-EC"/>
</dbReference>
<dbReference type="GO" id="GO:0006104">
    <property type="term" value="P:succinyl-CoA metabolic process"/>
    <property type="evidence" value="ECO:0007669"/>
    <property type="project" value="InterPro"/>
</dbReference>
<dbReference type="GO" id="GO:0006099">
    <property type="term" value="P:tricarboxylic acid cycle"/>
    <property type="evidence" value="ECO:0007669"/>
    <property type="project" value="UniProtKB-UniPathway"/>
</dbReference>
<dbReference type="FunFam" id="3.30.470.20:FF:000002">
    <property type="entry name" value="Succinate--CoA ligase [ADP-forming] subunit beta"/>
    <property type="match status" value="1"/>
</dbReference>
<dbReference type="FunFam" id="3.40.50.261:FF:000001">
    <property type="entry name" value="Succinate--CoA ligase [ADP-forming] subunit beta"/>
    <property type="match status" value="1"/>
</dbReference>
<dbReference type="FunFam" id="3.30.1490.20:FF:000004">
    <property type="entry name" value="Succinate--CoA ligase [ADP-forming] subunit beta, mitochondrial"/>
    <property type="match status" value="1"/>
</dbReference>
<dbReference type="Gene3D" id="3.30.1490.20">
    <property type="entry name" value="ATP-grasp fold, A domain"/>
    <property type="match status" value="1"/>
</dbReference>
<dbReference type="Gene3D" id="3.30.470.20">
    <property type="entry name" value="ATP-grasp fold, B domain"/>
    <property type="match status" value="1"/>
</dbReference>
<dbReference type="Gene3D" id="3.40.50.261">
    <property type="entry name" value="Succinyl-CoA synthetase domains"/>
    <property type="match status" value="1"/>
</dbReference>
<dbReference type="HAMAP" id="MF_00558">
    <property type="entry name" value="Succ_CoA_beta"/>
    <property type="match status" value="1"/>
</dbReference>
<dbReference type="HAMAP" id="MF_03221">
    <property type="entry name" value="Succ_CoA_betaG_euk"/>
    <property type="match status" value="1"/>
</dbReference>
<dbReference type="InterPro" id="IPR013650">
    <property type="entry name" value="ATP-grasp_succ-CoA_synth-type"/>
</dbReference>
<dbReference type="InterPro" id="IPR013815">
    <property type="entry name" value="ATP_grasp_subdomain_1"/>
</dbReference>
<dbReference type="InterPro" id="IPR017866">
    <property type="entry name" value="Succ-CoA_synthase_bsu_CS"/>
</dbReference>
<dbReference type="InterPro" id="IPR005811">
    <property type="entry name" value="SUCC_ACL_C"/>
</dbReference>
<dbReference type="InterPro" id="IPR034722">
    <property type="entry name" value="Succ_CoA_betaG_euk"/>
</dbReference>
<dbReference type="InterPro" id="IPR005809">
    <property type="entry name" value="Succ_CoA_ligase-like_bsu"/>
</dbReference>
<dbReference type="InterPro" id="IPR016102">
    <property type="entry name" value="Succinyl-CoA_synth-like"/>
</dbReference>
<dbReference type="NCBIfam" id="NF001913">
    <property type="entry name" value="PRK00696.1"/>
    <property type="match status" value="1"/>
</dbReference>
<dbReference type="NCBIfam" id="TIGR01016">
    <property type="entry name" value="sucCoAbeta"/>
    <property type="match status" value="1"/>
</dbReference>
<dbReference type="PANTHER" id="PTHR11815:SF10">
    <property type="entry name" value="SUCCINATE--COA LIGASE [GDP-FORMING] SUBUNIT BETA, MITOCHONDRIAL"/>
    <property type="match status" value="1"/>
</dbReference>
<dbReference type="PANTHER" id="PTHR11815">
    <property type="entry name" value="SUCCINYL-COA SYNTHETASE BETA CHAIN"/>
    <property type="match status" value="1"/>
</dbReference>
<dbReference type="Pfam" id="PF08442">
    <property type="entry name" value="ATP-grasp_2"/>
    <property type="match status" value="1"/>
</dbReference>
<dbReference type="Pfam" id="PF00549">
    <property type="entry name" value="Ligase_CoA"/>
    <property type="match status" value="1"/>
</dbReference>
<dbReference type="PIRSF" id="PIRSF001554">
    <property type="entry name" value="SucCS_beta"/>
    <property type="match status" value="1"/>
</dbReference>
<dbReference type="SUPFAM" id="SSF56059">
    <property type="entry name" value="Glutathione synthetase ATP-binding domain-like"/>
    <property type="match status" value="1"/>
</dbReference>
<dbReference type="SUPFAM" id="SSF52210">
    <property type="entry name" value="Succinyl-CoA synthetase domains"/>
    <property type="match status" value="1"/>
</dbReference>
<dbReference type="PROSITE" id="PS01217">
    <property type="entry name" value="SUCCINYL_COA_LIG_3"/>
    <property type="match status" value="1"/>
</dbReference>
<organism>
    <name type="scientific">Columba livia</name>
    <name type="common">Rock dove</name>
    <dbReference type="NCBI Taxonomy" id="8932"/>
    <lineage>
        <taxon>Eukaryota</taxon>
        <taxon>Metazoa</taxon>
        <taxon>Chordata</taxon>
        <taxon>Craniata</taxon>
        <taxon>Vertebrata</taxon>
        <taxon>Euteleostomi</taxon>
        <taxon>Archelosauria</taxon>
        <taxon>Archosauria</taxon>
        <taxon>Dinosauria</taxon>
        <taxon>Saurischia</taxon>
        <taxon>Theropoda</taxon>
        <taxon>Coelurosauria</taxon>
        <taxon>Aves</taxon>
        <taxon>Neognathae</taxon>
        <taxon>Neoaves</taxon>
        <taxon>Columbimorphae</taxon>
        <taxon>Columbiformes</taxon>
        <taxon>Columbidae</taxon>
        <taxon>Columba</taxon>
    </lineage>
</organism>
<sequence>EYQSKKIMADHGVTVQRFFVADSANDALEAAQRLKAKEIVLKAQILAGGRGKGVFNSGLKGGVHLTKDPKIVEQLAKQMIGYNLSTKQTPKDGVTVKKVMVAEALNISRETYFAILMDRACNGPVMVGSPQGGVDIEEVAVTSPELIFKEEIDIFEGIKDHQALQMAKNLGFKGPLQQQAADQIKKLYNLFLKIDATQVEVNPFGETPEGQVVCFDAKINFDDNAEFRQKEIFAMDDKSENEPIENEAAKYDLKYIGLDGNIACFVNGAGLAMATCDIISLNGGKPANFLDLGGGVKEAQVYQAFKLLTADPKVEAILVNIFGGIVNCAIIANGITRACRELELKVPLVVRLEGTNVHEAQRILNESGLPIMSANDLEDAAKKAVASVAKK</sequence>
<keyword id="KW-0903">Direct protein sequencing</keyword>
<keyword id="KW-0342">GTP-binding</keyword>
<keyword id="KW-0436">Ligase</keyword>
<keyword id="KW-0460">Magnesium</keyword>
<keyword id="KW-0479">Metal-binding</keyword>
<keyword id="KW-0496">Mitochondrion</keyword>
<keyword id="KW-0547">Nucleotide-binding</keyword>
<keyword id="KW-0816">Tricarboxylic acid cycle</keyword>
<name>SUCB2_COLLI</name>
<evidence type="ECO:0000255" key="1">
    <source>
        <dbReference type="HAMAP-Rule" id="MF_03221"/>
    </source>
</evidence>
<evidence type="ECO:0000269" key="2">
    <source>
    </source>
</evidence>
<evidence type="ECO:0000269" key="3">
    <source>
    </source>
</evidence>
<evidence type="ECO:0000305" key="4">
    <source>
    </source>
</evidence>
<feature type="chain" id="PRO_0000413702" description="Succinate--CoA ligase [GDP-forming] subunit beta, mitochondrial">
    <location>
        <begin position="1" status="less than"/>
        <end position="391"/>
    </location>
</feature>
<feature type="domain" description="ATP-grasp" evidence="1">
    <location>
        <begin position="5"/>
        <end position="233"/>
    </location>
</feature>
<feature type="binding site" evidence="1">
    <location>
        <position position="16"/>
    </location>
    <ligand>
        <name>GTP</name>
        <dbReference type="ChEBI" id="CHEBI:37565"/>
    </ligand>
</feature>
<feature type="binding site" evidence="1">
    <location>
        <begin position="49"/>
        <end position="51"/>
    </location>
    <ligand>
        <name>GTP</name>
        <dbReference type="ChEBI" id="CHEBI:37565"/>
    </ligand>
</feature>
<feature type="binding site" evidence="1">
    <location>
        <position position="105"/>
    </location>
    <ligand>
        <name>GTP</name>
        <dbReference type="ChEBI" id="CHEBI:37565"/>
    </ligand>
</feature>
<feature type="binding site" evidence="1">
    <location>
        <position position="202"/>
    </location>
    <ligand>
        <name>Mg(2+)</name>
        <dbReference type="ChEBI" id="CHEBI:18420"/>
    </ligand>
</feature>
<feature type="binding site" evidence="1">
    <location>
        <position position="216"/>
    </location>
    <ligand>
        <name>Mg(2+)</name>
        <dbReference type="ChEBI" id="CHEBI:18420"/>
    </ligand>
</feature>
<feature type="binding site" evidence="1">
    <location>
        <position position="267"/>
    </location>
    <ligand>
        <name>substrate</name>
        <note>ligand shared with subunit alpha</note>
    </ligand>
</feature>
<feature type="binding site" evidence="1">
    <location>
        <begin position="324"/>
        <end position="326"/>
    </location>
    <ligand>
        <name>substrate</name>
        <note>ligand shared with subunit alpha</note>
    </ligand>
</feature>
<feature type="site" description="Important for substrate specificity" evidence="1">
    <location>
        <position position="38"/>
    </location>
</feature>
<feature type="site" description="Important for substrate specificity" evidence="1">
    <location>
        <position position="106"/>
    </location>
</feature>
<feature type="non-terminal residue">
    <location>
        <position position="1"/>
    </location>
</feature>
<gene>
    <name evidence="1" type="primary">SUCLG2</name>
</gene>
<reference key="1">
    <citation type="journal article" date="1998" name="J. Biol. Chem.">
        <title>Genetic evidence for the expression of ATP- and GTP-specific succinyl-CoA synthetases in multicellular eucaryotes.</title>
        <authorList>
            <person name="Johnson J.D."/>
            <person name="Mehus J.G."/>
            <person name="Tews K."/>
            <person name="Milavetz B.I."/>
            <person name="Lambeth D.O."/>
        </authorList>
    </citation>
    <scope>NUCLEOTIDE SEQUENCE [MRNA]</scope>
    <scope>PROTEIN SEQUENCE OF 110-119</scope>
    <scope>TISSUE SPECIFICITY</scope>
    <source>
        <tissue>Liver</tissue>
    </source>
</reference>
<reference key="2">
    <citation type="journal article" date="1998" name="J. Biol. Chem.">
        <title>Characterization of the ATP- and GTP-specific succinyl-CoA synthetases in pigeon. The enzymes incorporate the same alpha-subunit.</title>
        <authorList>
            <person name="Johnson J.D."/>
            <person name="Muhonen W.W."/>
            <person name="Lambeth D.O."/>
        </authorList>
    </citation>
    <scope>FUNCTION</scope>
    <scope>CATALYTIC ACTIVITY</scope>
    <scope>SUBUNIT</scope>
    <scope>BIOPHYSICOCHEMICAL PROPERTIES</scope>
    <scope>SUBCELLULAR LOCATION</scope>
</reference>